<reference key="1">
    <citation type="journal article" date="1992" name="Proc. Natl. Acad. Sci. U.S.A.">
        <title>Classification of fungal chitin synthases.</title>
        <authorList>
            <person name="Bowen A.R."/>
            <person name="Chen-Wu J.L.-P."/>
            <person name="Momany M."/>
            <person name="Young R."/>
            <person name="Szaniszlo P.J."/>
            <person name="Robbins P.W."/>
        </authorList>
    </citation>
    <scope>NUCLEOTIDE SEQUENCE [GENOMIC DNA]</scope>
</reference>
<gene>
    <name type="primary">CHS2</name>
</gene>
<name>CHS2_EXOJE</name>
<protein>
    <recommendedName>
        <fullName>Chitin synthase 2</fullName>
        <ecNumber>2.4.1.16</ecNumber>
    </recommendedName>
    <alternativeName>
        <fullName>Chitin-UDP acetyl-glucosaminyl transferase 2</fullName>
    </alternativeName>
</protein>
<feature type="chain" id="PRO_0000193698" description="Chitin synthase 2">
    <location>
        <begin position="1" status="less than"/>
        <end position="188" status="greater than"/>
    </location>
</feature>
<feature type="non-terminal residue">
    <location>
        <position position="1"/>
    </location>
</feature>
<feature type="non-terminal residue">
    <location>
        <position position="188"/>
    </location>
</feature>
<proteinExistence type="inferred from homology"/>
<keyword id="KW-1003">Cell membrane</keyword>
<keyword id="KW-0961">Cell wall biogenesis/degradation</keyword>
<keyword id="KW-0328">Glycosyltransferase</keyword>
<keyword id="KW-0472">Membrane</keyword>
<keyword id="KW-0808">Transferase</keyword>
<keyword id="KW-0812">Transmembrane</keyword>
<comment type="function">
    <text evidence="1">Polymerizes chitin, a structural polymer of the cell wall and septum, by transferring the sugar moiety of UDP-GlcNAc to the non-reducing end of the growing chitin polymer.</text>
</comment>
<comment type="catalytic activity">
    <reaction>
        <text>[(1-&gt;4)-N-acetyl-beta-D-glucosaminyl](n) + UDP-N-acetyl-alpha-D-glucosamine = [(1-&gt;4)-N-acetyl-beta-D-glucosaminyl](n+1) + UDP + H(+)</text>
        <dbReference type="Rhea" id="RHEA:16637"/>
        <dbReference type="Rhea" id="RHEA-COMP:9593"/>
        <dbReference type="Rhea" id="RHEA-COMP:9595"/>
        <dbReference type="ChEBI" id="CHEBI:15378"/>
        <dbReference type="ChEBI" id="CHEBI:17029"/>
        <dbReference type="ChEBI" id="CHEBI:57705"/>
        <dbReference type="ChEBI" id="CHEBI:58223"/>
        <dbReference type="EC" id="2.4.1.16"/>
    </reaction>
</comment>
<comment type="subcellular location">
    <subcellularLocation>
        <location evidence="1">Cell membrane</location>
        <topology evidence="1">Multi-pass membrane protein</topology>
    </subcellularLocation>
</comment>
<comment type="similarity">
    <text evidence="1">Belongs to the chitin synthase family.</text>
</comment>
<sequence length="188" mass="21129">EIEFTRTMHGIMRNISHFCSRTKSRTWGKDGWQKIVVCVIADGRQKVHPRTLNALAALGVYQDGIAKNIVNQKEVTAHVYEYTTQVSLDEGMKFKGAEKGIVPCQMIFCLKEQNKKKLNSHRWFFNAFGRALTPNVCILLDVGTKPDSKALYHLWKAFDQDSNVAGAAGEIKADKGKGWMCLLNPLVS</sequence>
<accession>P30586</accession>
<organism>
    <name type="scientific">Exophiala jeanselmei</name>
    <name type="common">Dematiaceous fungus</name>
    <name type="synonym">Phialophora jeanselmei</name>
    <dbReference type="NCBI Taxonomy" id="5584"/>
    <lineage>
        <taxon>Eukaryota</taxon>
        <taxon>Fungi</taxon>
        <taxon>Dikarya</taxon>
        <taxon>Ascomycota</taxon>
        <taxon>Pezizomycotina</taxon>
        <taxon>Eurotiomycetes</taxon>
        <taxon>Chaetothyriomycetidae</taxon>
        <taxon>Chaetothyriales</taxon>
        <taxon>Herpotrichiellaceae</taxon>
        <taxon>Exophiala</taxon>
    </lineage>
</organism>
<evidence type="ECO:0000305" key="1"/>
<dbReference type="EC" id="2.4.1.16"/>
<dbReference type="EMBL" id="M82945">
    <property type="protein sequence ID" value="AAA33332.1"/>
    <property type="molecule type" value="Genomic_DNA"/>
</dbReference>
<dbReference type="PIR" id="F45188">
    <property type="entry name" value="F45188"/>
</dbReference>
<dbReference type="SMR" id="P30586"/>
<dbReference type="CAZy" id="GT2">
    <property type="family name" value="Glycosyltransferase Family 2"/>
</dbReference>
<dbReference type="GO" id="GO:0030428">
    <property type="term" value="C:cell septum"/>
    <property type="evidence" value="ECO:0007669"/>
    <property type="project" value="TreeGrafter"/>
</dbReference>
<dbReference type="GO" id="GO:0005886">
    <property type="term" value="C:plasma membrane"/>
    <property type="evidence" value="ECO:0007669"/>
    <property type="project" value="UniProtKB-SubCell"/>
</dbReference>
<dbReference type="GO" id="GO:0004100">
    <property type="term" value="F:chitin synthase activity"/>
    <property type="evidence" value="ECO:0007669"/>
    <property type="project" value="UniProtKB-EC"/>
</dbReference>
<dbReference type="GO" id="GO:0071555">
    <property type="term" value="P:cell wall organization"/>
    <property type="evidence" value="ECO:0007669"/>
    <property type="project" value="UniProtKB-KW"/>
</dbReference>
<dbReference type="GO" id="GO:0006031">
    <property type="term" value="P:chitin biosynthetic process"/>
    <property type="evidence" value="ECO:0007669"/>
    <property type="project" value="InterPro"/>
</dbReference>
<dbReference type="InterPro" id="IPR004835">
    <property type="entry name" value="Chitin_synth"/>
</dbReference>
<dbReference type="InterPro" id="IPR004834">
    <property type="entry name" value="Chitin_synth_fun"/>
</dbReference>
<dbReference type="PANTHER" id="PTHR22914">
    <property type="entry name" value="CHITIN SYNTHASE"/>
    <property type="match status" value="1"/>
</dbReference>
<dbReference type="PANTHER" id="PTHR22914:SF38">
    <property type="entry name" value="CHITIN SYNTHASE 2"/>
    <property type="match status" value="1"/>
</dbReference>
<dbReference type="Pfam" id="PF01644">
    <property type="entry name" value="Chitin_synth_1"/>
    <property type="match status" value="1"/>
</dbReference>